<dbReference type="EC" id="2.7.2.3" evidence="2"/>
<dbReference type="EMBL" id="AE017221">
    <property type="protein sequence ID" value="AAS80898.1"/>
    <property type="molecule type" value="Genomic_DNA"/>
</dbReference>
<dbReference type="RefSeq" id="WP_011172995.1">
    <property type="nucleotide sequence ID" value="NC_005835.1"/>
</dbReference>
<dbReference type="SMR" id="P62420"/>
<dbReference type="KEGG" id="tth:TT_C0550"/>
<dbReference type="eggNOG" id="COG0126">
    <property type="taxonomic scope" value="Bacteria"/>
</dbReference>
<dbReference type="HOGENOM" id="CLU_025427_0_2_0"/>
<dbReference type="OrthoDB" id="9808460at2"/>
<dbReference type="UniPathway" id="UPA00109">
    <property type="reaction ID" value="UER00185"/>
</dbReference>
<dbReference type="Proteomes" id="UP000000592">
    <property type="component" value="Chromosome"/>
</dbReference>
<dbReference type="GO" id="GO:0005829">
    <property type="term" value="C:cytosol"/>
    <property type="evidence" value="ECO:0007669"/>
    <property type="project" value="TreeGrafter"/>
</dbReference>
<dbReference type="GO" id="GO:0043531">
    <property type="term" value="F:ADP binding"/>
    <property type="evidence" value="ECO:0007669"/>
    <property type="project" value="TreeGrafter"/>
</dbReference>
<dbReference type="GO" id="GO:0005524">
    <property type="term" value="F:ATP binding"/>
    <property type="evidence" value="ECO:0007669"/>
    <property type="project" value="UniProtKB-KW"/>
</dbReference>
<dbReference type="GO" id="GO:0004618">
    <property type="term" value="F:phosphoglycerate kinase activity"/>
    <property type="evidence" value="ECO:0007669"/>
    <property type="project" value="UniProtKB-UniRule"/>
</dbReference>
<dbReference type="GO" id="GO:0006094">
    <property type="term" value="P:gluconeogenesis"/>
    <property type="evidence" value="ECO:0007669"/>
    <property type="project" value="TreeGrafter"/>
</dbReference>
<dbReference type="GO" id="GO:0006096">
    <property type="term" value="P:glycolytic process"/>
    <property type="evidence" value="ECO:0007669"/>
    <property type="project" value="UniProtKB-UniRule"/>
</dbReference>
<dbReference type="CDD" id="cd00318">
    <property type="entry name" value="Phosphoglycerate_kinase"/>
    <property type="match status" value="1"/>
</dbReference>
<dbReference type="FunFam" id="3.40.50.1260:FF:000003">
    <property type="entry name" value="Phosphoglycerate kinase"/>
    <property type="match status" value="1"/>
</dbReference>
<dbReference type="FunFam" id="3.40.50.1260:FF:000006">
    <property type="entry name" value="Phosphoglycerate kinase"/>
    <property type="match status" value="1"/>
</dbReference>
<dbReference type="Gene3D" id="3.40.50.1260">
    <property type="entry name" value="Phosphoglycerate kinase, N-terminal domain"/>
    <property type="match status" value="2"/>
</dbReference>
<dbReference type="HAMAP" id="MF_00145">
    <property type="entry name" value="Phosphoglyc_kinase"/>
    <property type="match status" value="1"/>
</dbReference>
<dbReference type="InterPro" id="IPR001576">
    <property type="entry name" value="Phosphoglycerate_kinase"/>
</dbReference>
<dbReference type="InterPro" id="IPR015911">
    <property type="entry name" value="Phosphoglycerate_kinase_CS"/>
</dbReference>
<dbReference type="InterPro" id="IPR015824">
    <property type="entry name" value="Phosphoglycerate_kinase_N"/>
</dbReference>
<dbReference type="InterPro" id="IPR036043">
    <property type="entry name" value="Phosphoglycerate_kinase_sf"/>
</dbReference>
<dbReference type="PANTHER" id="PTHR11406">
    <property type="entry name" value="PHOSPHOGLYCERATE KINASE"/>
    <property type="match status" value="1"/>
</dbReference>
<dbReference type="PANTHER" id="PTHR11406:SF23">
    <property type="entry name" value="PHOSPHOGLYCERATE KINASE 1, CHLOROPLASTIC-RELATED"/>
    <property type="match status" value="1"/>
</dbReference>
<dbReference type="Pfam" id="PF00162">
    <property type="entry name" value="PGK"/>
    <property type="match status" value="1"/>
</dbReference>
<dbReference type="PIRSF" id="PIRSF000724">
    <property type="entry name" value="Pgk"/>
    <property type="match status" value="1"/>
</dbReference>
<dbReference type="PRINTS" id="PR00477">
    <property type="entry name" value="PHGLYCKINASE"/>
</dbReference>
<dbReference type="SUPFAM" id="SSF53748">
    <property type="entry name" value="Phosphoglycerate kinase"/>
    <property type="match status" value="1"/>
</dbReference>
<dbReference type="PROSITE" id="PS00111">
    <property type="entry name" value="PGLYCERATE_KINASE"/>
    <property type="match status" value="1"/>
</dbReference>
<sequence>MRTLLDLDPKGKRVLVRVDYNVPVQDGKVQDETRILESLPTLRHLLAGGASLVLLSHLGRPKGPDPRYSLAPVGEALRAHLPEARFAPFPPGSEEARREAEALRPGEVLLLENVRFEPGEEKNDPELSARYARLGEAFVLDAFGSAHRAHASVVGVARLLPAYAGFLMEKEVRALSRLLKDPERPYAVVLGGAKVSDKIGVIESLLPRIDRLLIGGAMAFTFLKALGGEVGKSLVEEDRLDLAKDLLGRAEALGVRVYLPEDVVAAERIEAGVETRVFPARAIPVPYMGLDIGPKTREAFARALEGARTVFWNGPMGVFEVPPFDEGTLAVGRAIAALEGAFTVVGGGDSVAAVNRLGLKDRFGHVSTGGGASLEFLEKGTLPGLEVLEG</sequence>
<organism>
    <name type="scientific">Thermus thermophilus (strain ATCC BAA-163 / DSM 7039 / HB27)</name>
    <dbReference type="NCBI Taxonomy" id="262724"/>
    <lineage>
        <taxon>Bacteria</taxon>
        <taxon>Thermotogati</taxon>
        <taxon>Deinococcota</taxon>
        <taxon>Deinococci</taxon>
        <taxon>Thermales</taxon>
        <taxon>Thermaceae</taxon>
        <taxon>Thermus</taxon>
    </lineage>
</organism>
<name>PGK_THET2</name>
<feature type="initiator methionine" description="Removed" evidence="1">
    <location>
        <position position="1"/>
    </location>
</feature>
<feature type="chain" id="PRO_0000146026" description="Phosphoglycerate kinase">
    <location>
        <begin position="2"/>
        <end position="390"/>
    </location>
</feature>
<feature type="binding site" evidence="2">
    <location>
        <begin position="19"/>
        <end position="21"/>
    </location>
    <ligand>
        <name>substrate</name>
    </ligand>
</feature>
<feature type="binding site" evidence="2">
    <location>
        <position position="34"/>
    </location>
    <ligand>
        <name>substrate</name>
    </ligand>
</feature>
<feature type="binding site" evidence="2">
    <location>
        <begin position="57"/>
        <end position="60"/>
    </location>
    <ligand>
        <name>substrate</name>
    </ligand>
</feature>
<feature type="binding site" evidence="2">
    <location>
        <position position="115"/>
    </location>
    <ligand>
        <name>substrate</name>
    </ligand>
</feature>
<feature type="binding site" evidence="2">
    <location>
        <position position="148"/>
    </location>
    <ligand>
        <name>substrate</name>
    </ligand>
</feature>
<feature type="binding site" evidence="2">
    <location>
        <position position="198"/>
    </location>
    <ligand>
        <name>ATP</name>
        <dbReference type="ChEBI" id="CHEBI:30616"/>
    </ligand>
</feature>
<feature type="binding site" evidence="2">
    <location>
        <position position="289"/>
    </location>
    <ligand>
        <name>ATP</name>
        <dbReference type="ChEBI" id="CHEBI:30616"/>
    </ligand>
</feature>
<feature type="binding site" evidence="2">
    <location>
        <position position="320"/>
    </location>
    <ligand>
        <name>ATP</name>
        <dbReference type="ChEBI" id="CHEBI:30616"/>
    </ligand>
</feature>
<feature type="binding site" evidence="2">
    <location>
        <begin position="347"/>
        <end position="350"/>
    </location>
    <ligand>
        <name>ATP</name>
        <dbReference type="ChEBI" id="CHEBI:30616"/>
    </ligand>
</feature>
<keyword id="KW-0067">ATP-binding</keyword>
<keyword id="KW-0963">Cytoplasm</keyword>
<keyword id="KW-0324">Glycolysis</keyword>
<keyword id="KW-0418">Kinase</keyword>
<keyword id="KW-0547">Nucleotide-binding</keyword>
<keyword id="KW-0808">Transferase</keyword>
<gene>
    <name evidence="2" type="primary">pgk</name>
    <name type="ordered locus">TT_C0550</name>
</gene>
<proteinExistence type="inferred from homology"/>
<protein>
    <recommendedName>
        <fullName evidence="2">Phosphoglycerate kinase</fullName>
        <ecNumber evidence="2">2.7.2.3</ecNumber>
    </recommendedName>
</protein>
<reference key="1">
    <citation type="journal article" date="2004" name="Nat. Biotechnol.">
        <title>The genome sequence of the extreme thermophile Thermus thermophilus.</title>
        <authorList>
            <person name="Henne A."/>
            <person name="Brueggemann H."/>
            <person name="Raasch C."/>
            <person name="Wiezer A."/>
            <person name="Hartsch T."/>
            <person name="Liesegang H."/>
            <person name="Johann A."/>
            <person name="Lienard T."/>
            <person name="Gohl O."/>
            <person name="Martinez-Arias R."/>
            <person name="Jacobi C."/>
            <person name="Starkuviene V."/>
            <person name="Schlenczeck S."/>
            <person name="Dencker S."/>
            <person name="Huber R."/>
            <person name="Klenk H.-P."/>
            <person name="Kramer W."/>
            <person name="Merkl R."/>
            <person name="Gottschalk G."/>
            <person name="Fritz H.-J."/>
        </authorList>
    </citation>
    <scope>NUCLEOTIDE SEQUENCE [LARGE SCALE GENOMIC DNA]</scope>
    <source>
        <strain>ATCC BAA-163 / DSM 7039 / HB27</strain>
    </source>
</reference>
<accession>P62420</accession>
<comment type="catalytic activity">
    <reaction evidence="2">
        <text>(2R)-3-phosphoglycerate + ATP = (2R)-3-phospho-glyceroyl phosphate + ADP</text>
        <dbReference type="Rhea" id="RHEA:14801"/>
        <dbReference type="ChEBI" id="CHEBI:30616"/>
        <dbReference type="ChEBI" id="CHEBI:57604"/>
        <dbReference type="ChEBI" id="CHEBI:58272"/>
        <dbReference type="ChEBI" id="CHEBI:456216"/>
        <dbReference type="EC" id="2.7.2.3"/>
    </reaction>
</comment>
<comment type="pathway">
    <text evidence="2">Carbohydrate degradation; glycolysis; pyruvate from D-glyceraldehyde 3-phosphate: step 2/5.</text>
</comment>
<comment type="subunit">
    <text evidence="2">Monomer.</text>
</comment>
<comment type="subcellular location">
    <subcellularLocation>
        <location evidence="2">Cytoplasm</location>
    </subcellularLocation>
</comment>
<comment type="similarity">
    <text evidence="2">Belongs to the phosphoglycerate kinase family.</text>
</comment>
<evidence type="ECO:0000250" key="1"/>
<evidence type="ECO:0000255" key="2">
    <source>
        <dbReference type="HAMAP-Rule" id="MF_00145"/>
    </source>
</evidence>